<reference key="1">
    <citation type="submission" date="2008-04" db="EMBL/GenBank/DDBJ databases">
        <title>Complete sequence of chromosome 2 of Burkholderia ambifaria MC40-6.</title>
        <authorList>
            <person name="Copeland A."/>
            <person name="Lucas S."/>
            <person name="Lapidus A."/>
            <person name="Glavina del Rio T."/>
            <person name="Dalin E."/>
            <person name="Tice H."/>
            <person name="Pitluck S."/>
            <person name="Chain P."/>
            <person name="Malfatti S."/>
            <person name="Shin M."/>
            <person name="Vergez L."/>
            <person name="Lang D."/>
            <person name="Schmutz J."/>
            <person name="Larimer F."/>
            <person name="Land M."/>
            <person name="Hauser L."/>
            <person name="Kyrpides N."/>
            <person name="Lykidis A."/>
            <person name="Ramette A."/>
            <person name="Konstantinidis K."/>
            <person name="Tiedje J."/>
            <person name="Richardson P."/>
        </authorList>
    </citation>
    <scope>NUCLEOTIDE SEQUENCE [LARGE SCALE GENOMIC DNA]</scope>
    <source>
        <strain>MC40-6</strain>
    </source>
</reference>
<dbReference type="EC" id="3.1.11.6" evidence="1"/>
<dbReference type="EMBL" id="CP001026">
    <property type="protein sequence ID" value="ACB66241.1"/>
    <property type="molecule type" value="Genomic_DNA"/>
</dbReference>
<dbReference type="RefSeq" id="WP_006760428.1">
    <property type="nucleotide sequence ID" value="NC_010552.1"/>
</dbReference>
<dbReference type="SMR" id="B1Z1G0"/>
<dbReference type="KEGG" id="bac:BamMC406_3774"/>
<dbReference type="HOGENOM" id="CLU_145918_2_0_4"/>
<dbReference type="OrthoDB" id="287668at2"/>
<dbReference type="Proteomes" id="UP000001680">
    <property type="component" value="Chromosome 2"/>
</dbReference>
<dbReference type="GO" id="GO:0005829">
    <property type="term" value="C:cytosol"/>
    <property type="evidence" value="ECO:0007669"/>
    <property type="project" value="TreeGrafter"/>
</dbReference>
<dbReference type="GO" id="GO:0009318">
    <property type="term" value="C:exodeoxyribonuclease VII complex"/>
    <property type="evidence" value="ECO:0007669"/>
    <property type="project" value="InterPro"/>
</dbReference>
<dbReference type="GO" id="GO:0008855">
    <property type="term" value="F:exodeoxyribonuclease VII activity"/>
    <property type="evidence" value="ECO:0007669"/>
    <property type="project" value="UniProtKB-UniRule"/>
</dbReference>
<dbReference type="GO" id="GO:0006308">
    <property type="term" value="P:DNA catabolic process"/>
    <property type="evidence" value="ECO:0007669"/>
    <property type="project" value="UniProtKB-UniRule"/>
</dbReference>
<dbReference type="Gene3D" id="1.10.287.1040">
    <property type="entry name" value="Exonuclease VII, small subunit"/>
    <property type="match status" value="1"/>
</dbReference>
<dbReference type="HAMAP" id="MF_00337">
    <property type="entry name" value="Exonuc_7_S"/>
    <property type="match status" value="1"/>
</dbReference>
<dbReference type="InterPro" id="IPR003761">
    <property type="entry name" value="Exonuc_VII_S"/>
</dbReference>
<dbReference type="InterPro" id="IPR037004">
    <property type="entry name" value="Exonuc_VII_ssu_sf"/>
</dbReference>
<dbReference type="NCBIfam" id="NF002141">
    <property type="entry name" value="PRK00977.1-5"/>
    <property type="match status" value="1"/>
</dbReference>
<dbReference type="NCBIfam" id="TIGR01280">
    <property type="entry name" value="xseB"/>
    <property type="match status" value="1"/>
</dbReference>
<dbReference type="PANTHER" id="PTHR34137">
    <property type="entry name" value="EXODEOXYRIBONUCLEASE 7 SMALL SUBUNIT"/>
    <property type="match status" value="1"/>
</dbReference>
<dbReference type="PANTHER" id="PTHR34137:SF1">
    <property type="entry name" value="EXODEOXYRIBONUCLEASE 7 SMALL SUBUNIT"/>
    <property type="match status" value="1"/>
</dbReference>
<dbReference type="Pfam" id="PF02609">
    <property type="entry name" value="Exonuc_VII_S"/>
    <property type="match status" value="1"/>
</dbReference>
<dbReference type="SUPFAM" id="SSF116842">
    <property type="entry name" value="XseB-like"/>
    <property type="match status" value="1"/>
</dbReference>
<proteinExistence type="inferred from homology"/>
<name>EX7S_BURA4</name>
<organism>
    <name type="scientific">Burkholderia ambifaria (strain MC40-6)</name>
    <dbReference type="NCBI Taxonomy" id="398577"/>
    <lineage>
        <taxon>Bacteria</taxon>
        <taxon>Pseudomonadati</taxon>
        <taxon>Pseudomonadota</taxon>
        <taxon>Betaproteobacteria</taxon>
        <taxon>Burkholderiales</taxon>
        <taxon>Burkholderiaceae</taxon>
        <taxon>Burkholderia</taxon>
        <taxon>Burkholderia cepacia complex</taxon>
    </lineage>
</organism>
<comment type="function">
    <text evidence="1">Bidirectionally degrades single-stranded DNA into large acid-insoluble oligonucleotides, which are then degraded further into small acid-soluble oligonucleotides.</text>
</comment>
<comment type="catalytic activity">
    <reaction evidence="1">
        <text>Exonucleolytic cleavage in either 5'- to 3'- or 3'- to 5'-direction to yield nucleoside 5'-phosphates.</text>
        <dbReference type="EC" id="3.1.11.6"/>
    </reaction>
</comment>
<comment type="subunit">
    <text evidence="1">Heterooligomer composed of large and small subunits.</text>
</comment>
<comment type="subcellular location">
    <subcellularLocation>
        <location evidence="1">Cytoplasm</location>
    </subcellularLocation>
</comment>
<comment type="similarity">
    <text evidence="1">Belongs to the XseB family.</text>
</comment>
<protein>
    <recommendedName>
        <fullName evidence="1">Exodeoxyribonuclease 7 small subunit</fullName>
        <ecNumber evidence="1">3.1.11.6</ecNumber>
    </recommendedName>
    <alternativeName>
        <fullName evidence="1">Exodeoxyribonuclease VII small subunit</fullName>
        <shortName evidence="1">Exonuclease VII small subunit</shortName>
    </alternativeName>
</protein>
<sequence>MAKTASPGATPPDNGTEPLPDNYEMALAELETLVARMEGGALSLEDSLAAYRRGANLVAFCQQQLEKVEQQVRVLDGATLKPLSSGTAATDGEDDDL</sequence>
<keyword id="KW-0963">Cytoplasm</keyword>
<keyword id="KW-0269">Exonuclease</keyword>
<keyword id="KW-0378">Hydrolase</keyword>
<keyword id="KW-0540">Nuclease</keyword>
<gene>
    <name evidence="1" type="primary">xseB</name>
    <name type="ordered locus">BamMC406_3774</name>
</gene>
<feature type="chain" id="PRO_1000119903" description="Exodeoxyribonuclease 7 small subunit">
    <location>
        <begin position="1"/>
        <end position="97"/>
    </location>
</feature>
<feature type="region of interest" description="Disordered" evidence="2">
    <location>
        <begin position="1"/>
        <end position="22"/>
    </location>
</feature>
<accession>B1Z1G0</accession>
<evidence type="ECO:0000255" key="1">
    <source>
        <dbReference type="HAMAP-Rule" id="MF_00337"/>
    </source>
</evidence>
<evidence type="ECO:0000256" key="2">
    <source>
        <dbReference type="SAM" id="MobiDB-lite"/>
    </source>
</evidence>